<sequence>MKKKLILAAAGAMAVFSLAACSSGSKDIATMKGSTITVDDFYNQIKEQSTSQQAFSQMVIYKVFEEKYGDKVTDKDIQKNFDEAKEQVEAQGGKFSDALKQAGLTEKTFKKQLKQRAAYDAGLKAHLKITDEDLKTAWASFHPEVEAQIIQVASEDDAKAVKKEITDGGDFTKIAKEKSTDTATKKDGGKIKFDSQATTVPAEVKEAAFKLKDGEVSEPIAATNMQTYQTTYYVVKMTKNKAKGNDMKPYEKEIKKIAEETKLADQTFVSKVISDELKAANVKIKDDAFKNALAGYMQTESSSASSEKKESKSSDSKTSDTKTSDSEKATDSSSKTTESSSK</sequence>
<proteinExistence type="inferred from homology"/>
<keyword id="KW-1003">Cell membrane</keyword>
<keyword id="KW-0413">Isomerase</keyword>
<keyword id="KW-0449">Lipoprotein</keyword>
<keyword id="KW-0472">Membrane</keyword>
<keyword id="KW-0564">Palmitate</keyword>
<keyword id="KW-1185">Reference proteome</keyword>
<keyword id="KW-0697">Rotamase</keyword>
<keyword id="KW-0732">Signal</keyword>
<feature type="signal peptide" evidence="1">
    <location>
        <begin position="1"/>
        <end position="20"/>
    </location>
</feature>
<feature type="chain" id="PRO_0000029303" description="Foldase protein PrsA">
    <location>
        <begin position="21"/>
        <end position="342"/>
    </location>
</feature>
<feature type="domain" description="PpiC" evidence="1">
    <location>
        <begin position="142"/>
        <end position="235"/>
    </location>
</feature>
<feature type="region of interest" description="Disordered" evidence="2">
    <location>
        <begin position="297"/>
        <end position="342"/>
    </location>
</feature>
<feature type="compositionally biased region" description="Basic and acidic residues" evidence="2">
    <location>
        <begin position="306"/>
        <end position="330"/>
    </location>
</feature>
<feature type="compositionally biased region" description="Low complexity" evidence="2">
    <location>
        <begin position="331"/>
        <end position="342"/>
    </location>
</feature>
<feature type="lipid moiety-binding region" description="N-palmitoyl cysteine" evidence="1">
    <location>
        <position position="21"/>
    </location>
</feature>
<feature type="lipid moiety-binding region" description="S-diacylglycerol cysteine" evidence="1">
    <location>
        <position position="21"/>
    </location>
</feature>
<organism>
    <name type="scientific">Enterococcus faecalis (strain ATCC 700802 / V583)</name>
    <dbReference type="NCBI Taxonomy" id="226185"/>
    <lineage>
        <taxon>Bacteria</taxon>
        <taxon>Bacillati</taxon>
        <taxon>Bacillota</taxon>
        <taxon>Bacilli</taxon>
        <taxon>Lactobacillales</taxon>
        <taxon>Enterococcaceae</taxon>
        <taxon>Enterococcus</taxon>
    </lineage>
</organism>
<gene>
    <name evidence="1" type="primary">prsA</name>
    <name type="ordered locus">EF_0685</name>
</gene>
<dbReference type="EC" id="5.2.1.8" evidence="1"/>
<dbReference type="EMBL" id="AE016830">
    <property type="protein sequence ID" value="AAO80506.1"/>
    <property type="molecule type" value="Genomic_DNA"/>
</dbReference>
<dbReference type="RefSeq" id="NP_814435.1">
    <property type="nucleotide sequence ID" value="NC_004668.1"/>
</dbReference>
<dbReference type="RefSeq" id="WP_002371473.1">
    <property type="nucleotide sequence ID" value="NZ_KE136527.1"/>
</dbReference>
<dbReference type="SMR" id="Q837Y9"/>
<dbReference type="STRING" id="226185.EF_0685"/>
<dbReference type="EnsemblBacteria" id="AAO80506">
    <property type="protein sequence ID" value="AAO80506"/>
    <property type="gene ID" value="EF_0685"/>
</dbReference>
<dbReference type="KEGG" id="efa:EF0685"/>
<dbReference type="PATRIC" id="fig|226185.45.peg.2627"/>
<dbReference type="eggNOG" id="COG0760">
    <property type="taxonomic scope" value="Bacteria"/>
</dbReference>
<dbReference type="HOGENOM" id="CLU_034646_6_0_9"/>
<dbReference type="BRENDA" id="5.2.1.8">
    <property type="organism ID" value="2095"/>
</dbReference>
<dbReference type="Proteomes" id="UP000001415">
    <property type="component" value="Chromosome"/>
</dbReference>
<dbReference type="GO" id="GO:0005886">
    <property type="term" value="C:plasma membrane"/>
    <property type="evidence" value="ECO:0007669"/>
    <property type="project" value="UniProtKB-SubCell"/>
</dbReference>
<dbReference type="GO" id="GO:0003755">
    <property type="term" value="F:peptidyl-prolyl cis-trans isomerase activity"/>
    <property type="evidence" value="ECO:0007669"/>
    <property type="project" value="UniProtKB-UniRule"/>
</dbReference>
<dbReference type="GO" id="GO:0006457">
    <property type="term" value="P:protein folding"/>
    <property type="evidence" value="ECO:0007669"/>
    <property type="project" value="UniProtKB-UniRule"/>
</dbReference>
<dbReference type="Gene3D" id="3.10.50.40">
    <property type="match status" value="1"/>
</dbReference>
<dbReference type="HAMAP" id="MF_01145">
    <property type="entry name" value="Foldase_PrsA"/>
    <property type="match status" value="1"/>
</dbReference>
<dbReference type="InterPro" id="IPR023059">
    <property type="entry name" value="Foldase_PrsA"/>
</dbReference>
<dbReference type="InterPro" id="IPR046357">
    <property type="entry name" value="PPIase_dom_sf"/>
</dbReference>
<dbReference type="InterPro" id="IPR000297">
    <property type="entry name" value="PPIase_PpiC"/>
</dbReference>
<dbReference type="InterPro" id="IPR050245">
    <property type="entry name" value="PrsA_foldase"/>
</dbReference>
<dbReference type="InterPro" id="IPR027304">
    <property type="entry name" value="Trigger_fact/SurA_dom_sf"/>
</dbReference>
<dbReference type="PANTHER" id="PTHR47245:SF1">
    <property type="entry name" value="FOLDASE PROTEIN PRSA"/>
    <property type="match status" value="1"/>
</dbReference>
<dbReference type="PANTHER" id="PTHR47245">
    <property type="entry name" value="PEPTIDYLPROLYL ISOMERASE"/>
    <property type="match status" value="1"/>
</dbReference>
<dbReference type="Pfam" id="PF00639">
    <property type="entry name" value="Rotamase"/>
    <property type="match status" value="1"/>
</dbReference>
<dbReference type="SUPFAM" id="SSF54534">
    <property type="entry name" value="FKBP-like"/>
    <property type="match status" value="1"/>
</dbReference>
<dbReference type="SUPFAM" id="SSF109998">
    <property type="entry name" value="Triger factor/SurA peptide-binding domain-like"/>
    <property type="match status" value="1"/>
</dbReference>
<dbReference type="PROSITE" id="PS50198">
    <property type="entry name" value="PPIC_PPIASE_2"/>
    <property type="match status" value="1"/>
</dbReference>
<dbReference type="PROSITE" id="PS51257">
    <property type="entry name" value="PROKAR_LIPOPROTEIN"/>
    <property type="match status" value="1"/>
</dbReference>
<accession>Q837Y9</accession>
<name>PRSA_ENTFA</name>
<protein>
    <recommendedName>
        <fullName evidence="1">Foldase protein PrsA</fullName>
        <ecNumber evidence="1">5.2.1.8</ecNumber>
    </recommendedName>
</protein>
<evidence type="ECO:0000255" key="1">
    <source>
        <dbReference type="HAMAP-Rule" id="MF_01145"/>
    </source>
</evidence>
<evidence type="ECO:0000256" key="2">
    <source>
        <dbReference type="SAM" id="MobiDB-lite"/>
    </source>
</evidence>
<comment type="function">
    <text evidence="1">Plays a major role in protein secretion by helping the post-translocational extracellular folding of several secreted proteins.</text>
</comment>
<comment type="catalytic activity">
    <reaction evidence="1">
        <text>[protein]-peptidylproline (omega=180) = [protein]-peptidylproline (omega=0)</text>
        <dbReference type="Rhea" id="RHEA:16237"/>
        <dbReference type="Rhea" id="RHEA-COMP:10747"/>
        <dbReference type="Rhea" id="RHEA-COMP:10748"/>
        <dbReference type="ChEBI" id="CHEBI:83833"/>
        <dbReference type="ChEBI" id="CHEBI:83834"/>
        <dbReference type="EC" id="5.2.1.8"/>
    </reaction>
</comment>
<comment type="subcellular location">
    <subcellularLocation>
        <location evidence="1">Cell membrane</location>
        <topology evidence="1">Lipid-anchor</topology>
    </subcellularLocation>
</comment>
<comment type="similarity">
    <text evidence="1">Belongs to the PrsA family.</text>
</comment>
<reference key="1">
    <citation type="journal article" date="2003" name="Science">
        <title>Role of mobile DNA in the evolution of vancomycin-resistant Enterococcus faecalis.</title>
        <authorList>
            <person name="Paulsen I.T."/>
            <person name="Banerjei L."/>
            <person name="Myers G.S.A."/>
            <person name="Nelson K.E."/>
            <person name="Seshadri R."/>
            <person name="Read T.D."/>
            <person name="Fouts D.E."/>
            <person name="Eisen J.A."/>
            <person name="Gill S.R."/>
            <person name="Heidelberg J.F."/>
            <person name="Tettelin H."/>
            <person name="Dodson R.J."/>
            <person name="Umayam L.A."/>
            <person name="Brinkac L.M."/>
            <person name="Beanan M.J."/>
            <person name="Daugherty S.C."/>
            <person name="DeBoy R.T."/>
            <person name="Durkin S.A."/>
            <person name="Kolonay J.F."/>
            <person name="Madupu R."/>
            <person name="Nelson W.C."/>
            <person name="Vamathevan J.J."/>
            <person name="Tran B."/>
            <person name="Upton J."/>
            <person name="Hansen T."/>
            <person name="Shetty J."/>
            <person name="Khouri H.M."/>
            <person name="Utterback T.R."/>
            <person name="Radune D."/>
            <person name="Ketchum K.A."/>
            <person name="Dougherty B.A."/>
            <person name="Fraser C.M."/>
        </authorList>
    </citation>
    <scope>NUCLEOTIDE SEQUENCE [LARGE SCALE GENOMIC DNA]</scope>
    <source>
        <strain>ATCC 700802 / V583</strain>
    </source>
</reference>